<sequence length="51" mass="5967">ARSFSSYCVRCRRKTPSFNSKTVTFRNKRRAIRSHCAYCQVKKFRIIGHGG</sequence>
<comment type="subcellular location">
    <subcellularLocation>
        <location>Nucleus</location>
    </subcellularLocation>
</comment>
<comment type="tissue specificity">
    <text>Sperm.</text>
</comment>
<comment type="developmental stage">
    <text>Appears in sperm during epididymal transit.</text>
</comment>
<name>SPE_SEPOF</name>
<keyword id="KW-0903">Direct protein sequencing</keyword>
<keyword id="KW-0238">DNA-binding</keyword>
<keyword id="KW-0479">Metal-binding</keyword>
<keyword id="KW-0539">Nucleus</keyword>
<keyword id="KW-0862">Zinc</keyword>
<keyword id="KW-0863">Zinc-finger</keyword>
<accession>P80304</accession>
<organism>
    <name type="scientific">Sepia officinalis</name>
    <name type="common">Common cuttlefish</name>
    <dbReference type="NCBI Taxonomy" id="6610"/>
    <lineage>
        <taxon>Eukaryota</taxon>
        <taxon>Metazoa</taxon>
        <taxon>Spiralia</taxon>
        <taxon>Lophotrochozoa</taxon>
        <taxon>Mollusca</taxon>
        <taxon>Cephalopoda</taxon>
        <taxon>Coleoidea</taxon>
        <taxon>Decapodiformes</taxon>
        <taxon>Sepiida</taxon>
        <taxon>Sepiina</taxon>
        <taxon>Sepiidae</taxon>
        <taxon>Sepia</taxon>
    </lineage>
</organism>
<dbReference type="PIR" id="S42357">
    <property type="entry name" value="S42357"/>
</dbReference>
<dbReference type="GO" id="GO:0005634">
    <property type="term" value="C:nucleus"/>
    <property type="evidence" value="ECO:0007669"/>
    <property type="project" value="UniProtKB-SubCell"/>
</dbReference>
<dbReference type="GO" id="GO:0003677">
    <property type="term" value="F:DNA binding"/>
    <property type="evidence" value="ECO:0007669"/>
    <property type="project" value="UniProtKB-KW"/>
</dbReference>
<dbReference type="GO" id="GO:0008270">
    <property type="term" value="F:zinc ion binding"/>
    <property type="evidence" value="ECO:0007669"/>
    <property type="project" value="UniProtKB-KW"/>
</dbReference>
<dbReference type="InterPro" id="IPR044044">
    <property type="entry name" value="DUF5679"/>
</dbReference>
<dbReference type="Pfam" id="PF18930">
    <property type="entry name" value="DUF5679"/>
    <property type="match status" value="1"/>
</dbReference>
<reference key="1">
    <citation type="journal article" date="1994" name="Eur. J. Biochem.">
        <title>Isolation and characterization of a small putative zinc finger protein from cuttlefish epididymal sperm cells.</title>
        <authorList>
            <person name="Martin-Ponthieu A."/>
            <person name="Wouters-Tyrou D."/>
            <person name="Pudlo B."/>
            <person name="Buisine E."/>
            <person name="Sautiere P."/>
        </authorList>
    </citation>
    <scope>PROTEIN SEQUENCE</scope>
    <source>
        <tissue>Epididymis</tissue>
    </source>
</reference>
<evidence type="ECO:0000250" key="1"/>
<protein>
    <recommendedName>
        <fullName>Epididymal sperm protein E</fullName>
    </recommendedName>
</protein>
<proteinExistence type="evidence at protein level"/>
<feature type="chain" id="PRO_0000072118" description="Epididymal sperm protein E">
    <location>
        <begin position="1"/>
        <end position="51"/>
    </location>
</feature>
<feature type="zinc finger region" evidence="1">
    <location>
        <begin position="8"/>
        <end position="39"/>
    </location>
</feature>